<keyword id="KW-0119">Carbohydrate metabolism</keyword>
<keyword id="KW-1003">Cell membrane</keyword>
<keyword id="KW-0136">Cellulose degradation</keyword>
<keyword id="KW-0325">Glycoprotein</keyword>
<keyword id="KW-0326">Glycosidase</keyword>
<keyword id="KW-0378">Hydrolase</keyword>
<keyword id="KW-0472">Membrane</keyword>
<keyword id="KW-0624">Polysaccharide degradation</keyword>
<keyword id="KW-1185">Reference proteome</keyword>
<keyword id="KW-0735">Signal-anchor</keyword>
<keyword id="KW-0812">Transmembrane</keyword>
<keyword id="KW-1133">Transmembrane helix</keyword>
<accession>A1DLJ5</accession>
<proteinExistence type="inferred from homology"/>
<reference key="1">
    <citation type="journal article" date="2008" name="PLoS Genet.">
        <title>Genomic islands in the pathogenic filamentous fungus Aspergillus fumigatus.</title>
        <authorList>
            <person name="Fedorova N.D."/>
            <person name="Khaldi N."/>
            <person name="Joardar V.S."/>
            <person name="Maiti R."/>
            <person name="Amedeo P."/>
            <person name="Anderson M.J."/>
            <person name="Crabtree J."/>
            <person name="Silva J.C."/>
            <person name="Badger J.H."/>
            <person name="Albarraq A."/>
            <person name="Angiuoli S."/>
            <person name="Bussey H."/>
            <person name="Bowyer P."/>
            <person name="Cotty P.J."/>
            <person name="Dyer P.S."/>
            <person name="Egan A."/>
            <person name="Galens K."/>
            <person name="Fraser-Liggett C.M."/>
            <person name="Haas B.J."/>
            <person name="Inman J.M."/>
            <person name="Kent R."/>
            <person name="Lemieux S."/>
            <person name="Malavazi I."/>
            <person name="Orvis J."/>
            <person name="Roemer T."/>
            <person name="Ronning C.M."/>
            <person name="Sundaram J.P."/>
            <person name="Sutton G."/>
            <person name="Turner G."/>
            <person name="Venter J.C."/>
            <person name="White O.R."/>
            <person name="Whitty B.R."/>
            <person name="Youngman P."/>
            <person name="Wolfe K.H."/>
            <person name="Goldman G.H."/>
            <person name="Wortman J.R."/>
            <person name="Jiang B."/>
            <person name="Denning D.W."/>
            <person name="Nierman W.C."/>
        </authorList>
    </citation>
    <scope>NUCLEOTIDE SEQUENCE [LARGE SCALE GENOMIC DNA]</scope>
    <source>
        <strain>ATCC 1020 / DSM 3700 / CBS 544.65 / FGSC A1164 / JCM 1740 / NRRL 181 / WB 181</strain>
    </source>
</reference>
<protein>
    <recommendedName>
        <fullName>Probable beta-glucosidase E</fullName>
        <ecNumber>3.2.1.21</ecNumber>
    </recommendedName>
    <alternativeName>
        <fullName>Beta-D-glucoside glucohydrolase E</fullName>
    </alternativeName>
    <alternativeName>
        <fullName>Cellobiase E</fullName>
    </alternativeName>
    <alternativeName>
        <fullName>Gentiobiase E</fullName>
    </alternativeName>
</protein>
<name>BGLE_NEOFI</name>
<organism>
    <name type="scientific">Neosartorya fischeri (strain ATCC 1020 / DSM 3700 / CBS 544.65 / FGSC A1164 / JCM 1740 / NRRL 181 / WB 181)</name>
    <name type="common">Aspergillus fischerianus</name>
    <dbReference type="NCBI Taxonomy" id="331117"/>
    <lineage>
        <taxon>Eukaryota</taxon>
        <taxon>Fungi</taxon>
        <taxon>Dikarya</taxon>
        <taxon>Ascomycota</taxon>
        <taxon>Pezizomycotina</taxon>
        <taxon>Eurotiomycetes</taxon>
        <taxon>Eurotiomycetidae</taxon>
        <taxon>Eurotiales</taxon>
        <taxon>Aspergillaceae</taxon>
        <taxon>Aspergillus</taxon>
        <taxon>Aspergillus subgen. Fumigati</taxon>
    </lineage>
</organism>
<comment type="function">
    <text evidence="1">Beta-glucosidases are one of a number of cellulolytic enzymes involved in the degradation of cellulosic biomass. Catalyzes the last step releasing glucose from the inhibitory cellobiose (By similarity).</text>
</comment>
<comment type="catalytic activity">
    <reaction>
        <text>Hydrolysis of terminal, non-reducing beta-D-glucosyl residues with release of beta-D-glucose.</text>
        <dbReference type="EC" id="3.2.1.21"/>
    </reaction>
</comment>
<comment type="pathway">
    <text>Glycan metabolism; cellulose degradation.</text>
</comment>
<comment type="subcellular location">
    <subcellularLocation>
        <location evidence="1">Cell membrane</location>
        <topology evidence="1">Single-pass type II membrane protein</topology>
    </subcellularLocation>
</comment>
<comment type="similarity">
    <text evidence="4">Belongs to the glycosyl hydrolase 3 family.</text>
</comment>
<sequence>MAPPDSTHGGSFRDHLKTNDRSSTSKGKQRYAPLHEAIPEEISSFRSPSEYADADTDSDSDHENSGSYQLRPVDRYGSHHSSAFIPVIRDDGGVETYLDSITEAEQELLSASKQYDLFDDDDSDDLDSDEEATLRYKLKDRLKRRRARLQAWPPVKYARIWWRTLLAVIVTLAVVVWGFLSFAVSHREEPKVWPMVPSDSWFPSPKGGTLKHWEESYKKAQSLVRNMTLVEKVNITTGIGWQMGLCVGNTGLRFADHVSAFPAGITTGSTWNRELMRERGVAMGREARLKGVNVLLGPSMGPLGMMPAGGRNWEGFGSDPVLQAVAAAETIRGIQSNGVMATAKHFVMNEQEHFRQPFEWGIPTALSSNVGDRALHEVFAWPFAESIRADVASVMCSYQMVNNSHACENSKLLNGILKDELGFQGFVQSDWLAQRSGINSVLGGLDMSMPGDGLHWVDGKSLWGSELTRAVLNTSVPVERLNDMVTRIVAAWYHLGQDTWERPPPEGNGGPNFSSWTNDKVGWLHTGSNDGSYAVVNHYVDAQGTGPEAHSIIARKVAAEGTVLLKNVDRTLPLSRNASSPSGGILRVGIYGDDAGPASGPNACPDRGCNQGTLATGWGSGTVEFPYLVSPIEALESAWSTEIESTAYLRNAVMPADAVDKDLCLVFVNADSGEGYISAGGIHGDRNDLFLQKGGDTLVRTVASNCGGGQGKTVIVIHAVGPVVMESWIDLPGVHAVLLSNLPGQESGNALMDVLFGEVDASGRLPYTIGKSLEDYGPGAQVLYEPNAPVPQADFLDALYIDYRHFDRYNITPRFEFGFGLSYTTFELSDLSISPLQRKSRSPPPRPADAVAPPVYDTSLPDPASALFPTGFQPIFKYIYPYLSNLDGTAPRNYSFYPKGYNETQSPSPAGGGAGGHPALYEEMVSVKLQVSNTGDRKGQEVVQLYVSFPPDVTEEGDWVEVDSDADKTGEKQRERMKIEFPERVLRNFTKIELEPSERREVQMTLSRKDLSYWSTREQNWVMPEGKFQIWVGRSSRDLPLMGEY</sequence>
<evidence type="ECO:0000250" key="1"/>
<evidence type="ECO:0000255" key="2"/>
<evidence type="ECO:0000256" key="3">
    <source>
        <dbReference type="SAM" id="MobiDB-lite"/>
    </source>
</evidence>
<evidence type="ECO:0000305" key="4"/>
<dbReference type="EC" id="3.2.1.21"/>
<dbReference type="EMBL" id="DS027698">
    <property type="protein sequence ID" value="EAW15666.1"/>
    <property type="molecule type" value="Genomic_DNA"/>
</dbReference>
<dbReference type="RefSeq" id="XP_001257563.1">
    <property type="nucleotide sequence ID" value="XM_001257562.1"/>
</dbReference>
<dbReference type="SMR" id="A1DLJ5"/>
<dbReference type="STRING" id="331117.A1DLJ5"/>
<dbReference type="GlyCosmos" id="A1DLJ5">
    <property type="glycosylation" value="9 sites, No reported glycans"/>
</dbReference>
<dbReference type="EnsemblFungi" id="EAW15666">
    <property type="protein sequence ID" value="EAW15666"/>
    <property type="gene ID" value="NFIA_050080"/>
</dbReference>
<dbReference type="GeneID" id="4584078"/>
<dbReference type="KEGG" id="nfi:NFIA_050080"/>
<dbReference type="VEuPathDB" id="FungiDB:NFIA_050080"/>
<dbReference type="eggNOG" id="ENOG502QR4D">
    <property type="taxonomic scope" value="Eukaryota"/>
</dbReference>
<dbReference type="HOGENOM" id="CLU_004542_2_0_1"/>
<dbReference type="OMA" id="VVMESWI"/>
<dbReference type="OrthoDB" id="416222at2759"/>
<dbReference type="UniPathway" id="UPA00696"/>
<dbReference type="Proteomes" id="UP000006702">
    <property type="component" value="Unassembled WGS sequence"/>
</dbReference>
<dbReference type="GO" id="GO:0005886">
    <property type="term" value="C:plasma membrane"/>
    <property type="evidence" value="ECO:0007669"/>
    <property type="project" value="UniProtKB-SubCell"/>
</dbReference>
<dbReference type="GO" id="GO:0008422">
    <property type="term" value="F:beta-glucosidase activity"/>
    <property type="evidence" value="ECO:0007669"/>
    <property type="project" value="UniProtKB-EC"/>
</dbReference>
<dbReference type="GO" id="GO:0030245">
    <property type="term" value="P:cellulose catabolic process"/>
    <property type="evidence" value="ECO:0007669"/>
    <property type="project" value="UniProtKB-UniPathway"/>
</dbReference>
<dbReference type="FunFam" id="3.20.20.300:FF:000002">
    <property type="entry name" value="Probable beta-glucosidase"/>
    <property type="match status" value="1"/>
</dbReference>
<dbReference type="FunFam" id="3.40.50.1700:FF:000003">
    <property type="entry name" value="Probable beta-glucosidase"/>
    <property type="match status" value="1"/>
</dbReference>
<dbReference type="Gene3D" id="3.40.50.1700">
    <property type="entry name" value="Glycoside hydrolase family 3 C-terminal domain"/>
    <property type="match status" value="1"/>
</dbReference>
<dbReference type="Gene3D" id="3.20.20.300">
    <property type="entry name" value="Glycoside hydrolase, family 3, N-terminal domain"/>
    <property type="match status" value="1"/>
</dbReference>
<dbReference type="Gene3D" id="2.60.40.10">
    <property type="entry name" value="Immunoglobulins"/>
    <property type="match status" value="1"/>
</dbReference>
<dbReference type="InterPro" id="IPR050288">
    <property type="entry name" value="Cellulose_deg_GH3"/>
</dbReference>
<dbReference type="InterPro" id="IPR026891">
    <property type="entry name" value="Fn3-like"/>
</dbReference>
<dbReference type="InterPro" id="IPR002772">
    <property type="entry name" value="Glyco_hydro_3_C"/>
</dbReference>
<dbReference type="InterPro" id="IPR036881">
    <property type="entry name" value="Glyco_hydro_3_C_sf"/>
</dbReference>
<dbReference type="InterPro" id="IPR001764">
    <property type="entry name" value="Glyco_hydro_3_N"/>
</dbReference>
<dbReference type="InterPro" id="IPR036962">
    <property type="entry name" value="Glyco_hydro_3_N_sf"/>
</dbReference>
<dbReference type="InterPro" id="IPR017853">
    <property type="entry name" value="Glycoside_hydrolase_SF"/>
</dbReference>
<dbReference type="InterPro" id="IPR013783">
    <property type="entry name" value="Ig-like_fold"/>
</dbReference>
<dbReference type="PANTHER" id="PTHR42715">
    <property type="entry name" value="BETA-GLUCOSIDASE"/>
    <property type="match status" value="1"/>
</dbReference>
<dbReference type="PANTHER" id="PTHR42715:SF20">
    <property type="entry name" value="BETA-GLUCOSIDASE E-RELATED"/>
    <property type="match status" value="1"/>
</dbReference>
<dbReference type="Pfam" id="PF14310">
    <property type="entry name" value="Fn3-like"/>
    <property type="match status" value="1"/>
</dbReference>
<dbReference type="Pfam" id="PF00933">
    <property type="entry name" value="Glyco_hydro_3"/>
    <property type="match status" value="1"/>
</dbReference>
<dbReference type="Pfam" id="PF01915">
    <property type="entry name" value="Glyco_hydro_3_C"/>
    <property type="match status" value="1"/>
</dbReference>
<dbReference type="PRINTS" id="PR00133">
    <property type="entry name" value="GLHYDRLASE3"/>
</dbReference>
<dbReference type="SMART" id="SM01217">
    <property type="entry name" value="Fn3_like"/>
    <property type="match status" value="1"/>
</dbReference>
<dbReference type="SUPFAM" id="SSF51445">
    <property type="entry name" value="(Trans)glycosidases"/>
    <property type="match status" value="1"/>
</dbReference>
<dbReference type="SUPFAM" id="SSF52279">
    <property type="entry name" value="Beta-D-glucan exohydrolase, C-terminal domain"/>
    <property type="match status" value="1"/>
</dbReference>
<gene>
    <name type="primary">bglE</name>
    <name type="ORF">NFIA_050080</name>
</gene>
<feature type="chain" id="PRO_0000394875" description="Probable beta-glucosidase E">
    <location>
        <begin position="1"/>
        <end position="1045"/>
    </location>
</feature>
<feature type="topological domain" description="Cytoplasmic" evidence="2">
    <location>
        <begin position="1"/>
        <end position="163"/>
    </location>
</feature>
<feature type="transmembrane region" description="Helical; Signal-anchor for type II membrane protein" evidence="2">
    <location>
        <begin position="164"/>
        <end position="184"/>
    </location>
</feature>
<feature type="topological domain" description="Extracellular" evidence="2">
    <location>
        <begin position="185"/>
        <end position="1045"/>
    </location>
</feature>
<feature type="region of interest" description="Disordered" evidence="3">
    <location>
        <begin position="1"/>
        <end position="74"/>
    </location>
</feature>
<feature type="compositionally biased region" description="Basic and acidic residues" evidence="3">
    <location>
        <begin position="11"/>
        <end position="20"/>
    </location>
</feature>
<feature type="active site" evidence="1">
    <location>
        <position position="430"/>
    </location>
</feature>
<feature type="glycosylation site" description="N-linked (GlcNAc...) asparagine" evidence="2">
    <location>
        <position position="226"/>
    </location>
</feature>
<feature type="glycosylation site" description="N-linked (GlcNAc...) asparagine" evidence="2">
    <location>
        <position position="234"/>
    </location>
</feature>
<feature type="glycosylation site" description="N-linked (GlcNAc...) asparagine" evidence="2">
    <location>
        <position position="402"/>
    </location>
</feature>
<feature type="glycosylation site" description="N-linked (GlcNAc...) asparagine" evidence="2">
    <location>
        <position position="473"/>
    </location>
</feature>
<feature type="glycosylation site" description="N-linked (GlcNAc...) asparagine" evidence="2">
    <location>
        <position position="512"/>
    </location>
</feature>
<feature type="glycosylation site" description="N-linked (GlcNAc...) asparagine" evidence="2">
    <location>
        <position position="577"/>
    </location>
</feature>
<feature type="glycosylation site" description="N-linked (GlcNAc...) asparagine" evidence="2">
    <location>
        <position position="893"/>
    </location>
</feature>
<feature type="glycosylation site" description="N-linked (GlcNAc...) asparagine" evidence="2">
    <location>
        <position position="902"/>
    </location>
</feature>
<feature type="glycosylation site" description="N-linked (GlcNAc...) asparagine" evidence="2">
    <location>
        <position position="988"/>
    </location>
</feature>